<gene>
    <name evidence="1" type="primary">gcvH</name>
    <name type="ordered locus">VF_A0702</name>
</gene>
<reference key="1">
    <citation type="journal article" date="2005" name="Proc. Natl. Acad. Sci. U.S.A.">
        <title>Complete genome sequence of Vibrio fischeri: a symbiotic bacterium with pathogenic congeners.</title>
        <authorList>
            <person name="Ruby E.G."/>
            <person name="Urbanowski M."/>
            <person name="Campbell J."/>
            <person name="Dunn A."/>
            <person name="Faini M."/>
            <person name="Gunsalus R."/>
            <person name="Lostroh P."/>
            <person name="Lupp C."/>
            <person name="McCann J."/>
            <person name="Millikan D."/>
            <person name="Schaefer A."/>
            <person name="Stabb E."/>
            <person name="Stevens A."/>
            <person name="Visick K."/>
            <person name="Whistler C."/>
            <person name="Greenberg E.P."/>
        </authorList>
    </citation>
    <scope>NUCLEOTIDE SEQUENCE [LARGE SCALE GENOMIC DNA]</scope>
    <source>
        <strain>ATCC 700601 / ES114</strain>
    </source>
</reference>
<dbReference type="EMBL" id="CP000021">
    <property type="protein sequence ID" value="AAW87772.1"/>
    <property type="molecule type" value="Genomic_DNA"/>
</dbReference>
<dbReference type="RefSeq" id="WP_011263533.1">
    <property type="nucleotide sequence ID" value="NC_006841.2"/>
</dbReference>
<dbReference type="RefSeq" id="YP_206660.1">
    <property type="nucleotide sequence ID" value="NC_006841.2"/>
</dbReference>
<dbReference type="SMR" id="Q5DZM4"/>
<dbReference type="STRING" id="312309.VF_A0702"/>
<dbReference type="EnsemblBacteria" id="AAW87772">
    <property type="protein sequence ID" value="AAW87772"/>
    <property type="gene ID" value="VF_A0702"/>
</dbReference>
<dbReference type="GeneID" id="54166021"/>
<dbReference type="KEGG" id="vfi:VF_A0702"/>
<dbReference type="PATRIC" id="fig|312309.11.peg.3304"/>
<dbReference type="eggNOG" id="COG0509">
    <property type="taxonomic scope" value="Bacteria"/>
</dbReference>
<dbReference type="HOGENOM" id="CLU_097408_2_0_6"/>
<dbReference type="OrthoDB" id="9796712at2"/>
<dbReference type="Proteomes" id="UP000000537">
    <property type="component" value="Chromosome II"/>
</dbReference>
<dbReference type="GO" id="GO:0005829">
    <property type="term" value="C:cytosol"/>
    <property type="evidence" value="ECO:0007669"/>
    <property type="project" value="TreeGrafter"/>
</dbReference>
<dbReference type="GO" id="GO:0005960">
    <property type="term" value="C:glycine cleavage complex"/>
    <property type="evidence" value="ECO:0007669"/>
    <property type="project" value="InterPro"/>
</dbReference>
<dbReference type="GO" id="GO:0019464">
    <property type="term" value="P:glycine decarboxylation via glycine cleavage system"/>
    <property type="evidence" value="ECO:0007669"/>
    <property type="project" value="UniProtKB-UniRule"/>
</dbReference>
<dbReference type="CDD" id="cd06848">
    <property type="entry name" value="GCS_H"/>
    <property type="match status" value="1"/>
</dbReference>
<dbReference type="Gene3D" id="2.40.50.100">
    <property type="match status" value="1"/>
</dbReference>
<dbReference type="HAMAP" id="MF_00272">
    <property type="entry name" value="GcvH"/>
    <property type="match status" value="1"/>
</dbReference>
<dbReference type="InterPro" id="IPR003016">
    <property type="entry name" value="2-oxoA_DH_lipoyl-BS"/>
</dbReference>
<dbReference type="InterPro" id="IPR000089">
    <property type="entry name" value="Biotin_lipoyl"/>
</dbReference>
<dbReference type="InterPro" id="IPR002930">
    <property type="entry name" value="GCV_H"/>
</dbReference>
<dbReference type="InterPro" id="IPR033753">
    <property type="entry name" value="GCV_H/Fam206"/>
</dbReference>
<dbReference type="InterPro" id="IPR017453">
    <property type="entry name" value="GCV_H_sub"/>
</dbReference>
<dbReference type="InterPro" id="IPR011053">
    <property type="entry name" value="Single_hybrid_motif"/>
</dbReference>
<dbReference type="NCBIfam" id="TIGR00527">
    <property type="entry name" value="gcvH"/>
    <property type="match status" value="1"/>
</dbReference>
<dbReference type="NCBIfam" id="NF002270">
    <property type="entry name" value="PRK01202.1"/>
    <property type="match status" value="1"/>
</dbReference>
<dbReference type="PANTHER" id="PTHR11715">
    <property type="entry name" value="GLYCINE CLEAVAGE SYSTEM H PROTEIN"/>
    <property type="match status" value="1"/>
</dbReference>
<dbReference type="PANTHER" id="PTHR11715:SF3">
    <property type="entry name" value="GLYCINE CLEAVAGE SYSTEM H PROTEIN-RELATED"/>
    <property type="match status" value="1"/>
</dbReference>
<dbReference type="Pfam" id="PF01597">
    <property type="entry name" value="GCV_H"/>
    <property type="match status" value="1"/>
</dbReference>
<dbReference type="SUPFAM" id="SSF51230">
    <property type="entry name" value="Single hybrid motif"/>
    <property type="match status" value="1"/>
</dbReference>
<dbReference type="PROSITE" id="PS50968">
    <property type="entry name" value="BIOTINYL_LIPOYL"/>
    <property type="match status" value="1"/>
</dbReference>
<dbReference type="PROSITE" id="PS00189">
    <property type="entry name" value="LIPOYL"/>
    <property type="match status" value="1"/>
</dbReference>
<accession>Q5DZM4</accession>
<feature type="chain" id="PRO_0000302461" description="Glycine cleavage system H protein">
    <location>
        <begin position="1"/>
        <end position="126"/>
    </location>
</feature>
<feature type="domain" description="Lipoyl-binding" evidence="2">
    <location>
        <begin position="21"/>
        <end position="103"/>
    </location>
</feature>
<feature type="modified residue" description="N6-lipoyllysine" evidence="1">
    <location>
        <position position="62"/>
    </location>
</feature>
<organism>
    <name type="scientific">Aliivibrio fischeri (strain ATCC 700601 / ES114)</name>
    <name type="common">Vibrio fischeri</name>
    <dbReference type="NCBI Taxonomy" id="312309"/>
    <lineage>
        <taxon>Bacteria</taxon>
        <taxon>Pseudomonadati</taxon>
        <taxon>Pseudomonadota</taxon>
        <taxon>Gammaproteobacteria</taxon>
        <taxon>Vibrionales</taxon>
        <taxon>Vibrionaceae</taxon>
        <taxon>Aliivibrio</taxon>
    </lineage>
</organism>
<sequence length="126" mass="13821">MEKDLKFTTSHEWVRDNGDGTVTVGISDHAQGLLGDVVFVDLPEVDDEVTTGEGFSLVESVKAASDIYSPVTGVIVEINEELEDSPELVNEEPYESGWIARIKLSDSSELESLIPSDTYLESLDEE</sequence>
<proteinExistence type="inferred from homology"/>
<protein>
    <recommendedName>
        <fullName evidence="1">Glycine cleavage system H protein</fullName>
    </recommendedName>
</protein>
<comment type="function">
    <text evidence="1">The glycine cleavage system catalyzes the degradation of glycine. The H protein shuttles the methylamine group of glycine from the P protein to the T protein.</text>
</comment>
<comment type="cofactor">
    <cofactor evidence="1">
        <name>(R)-lipoate</name>
        <dbReference type="ChEBI" id="CHEBI:83088"/>
    </cofactor>
    <text evidence="1">Binds 1 lipoyl cofactor covalently.</text>
</comment>
<comment type="subunit">
    <text evidence="1">The glycine cleavage system is composed of four proteins: P, T, L and H.</text>
</comment>
<comment type="similarity">
    <text evidence="1">Belongs to the GcvH family.</text>
</comment>
<name>GCSH_ALIF1</name>
<keyword id="KW-0450">Lipoyl</keyword>
<keyword id="KW-1185">Reference proteome</keyword>
<evidence type="ECO:0000255" key="1">
    <source>
        <dbReference type="HAMAP-Rule" id="MF_00272"/>
    </source>
</evidence>
<evidence type="ECO:0000255" key="2">
    <source>
        <dbReference type="PROSITE-ProRule" id="PRU01066"/>
    </source>
</evidence>